<feature type="chain" id="PRO_1000119874" description="ATP-dependent dethiobiotin synthetase BioD">
    <location>
        <begin position="1"/>
        <end position="221"/>
    </location>
</feature>
<feature type="active site" evidence="1">
    <location>
        <position position="36"/>
    </location>
</feature>
<feature type="binding site" evidence="1">
    <location>
        <begin position="11"/>
        <end position="16"/>
    </location>
    <ligand>
        <name>ATP</name>
        <dbReference type="ChEBI" id="CHEBI:30616"/>
    </ligand>
</feature>
<feature type="binding site" evidence="1">
    <location>
        <position position="15"/>
    </location>
    <ligand>
        <name>Mg(2+)</name>
        <dbReference type="ChEBI" id="CHEBI:18420"/>
    </ligand>
</feature>
<feature type="binding site" evidence="1">
    <location>
        <position position="40"/>
    </location>
    <ligand>
        <name>substrate</name>
    </ligand>
</feature>
<feature type="binding site" evidence="1">
    <location>
        <position position="48"/>
    </location>
    <ligand>
        <name>ATP</name>
        <dbReference type="ChEBI" id="CHEBI:30616"/>
    </ligand>
</feature>
<feature type="binding site" evidence="1">
    <location>
        <position position="48"/>
    </location>
    <ligand>
        <name>Mg(2+)</name>
        <dbReference type="ChEBI" id="CHEBI:18420"/>
    </ligand>
</feature>
<feature type="binding site" evidence="1">
    <location>
        <begin position="107"/>
        <end position="110"/>
    </location>
    <ligand>
        <name>ATP</name>
        <dbReference type="ChEBI" id="CHEBI:30616"/>
    </ligand>
</feature>
<feature type="binding site" evidence="1">
    <location>
        <position position="107"/>
    </location>
    <ligand>
        <name>Mg(2+)</name>
        <dbReference type="ChEBI" id="CHEBI:18420"/>
    </ligand>
</feature>
<proteinExistence type="inferred from homology"/>
<accession>B4U7U3</accession>
<organism>
    <name type="scientific">Hydrogenobaculum sp. (strain Y04AAS1)</name>
    <dbReference type="NCBI Taxonomy" id="380749"/>
    <lineage>
        <taxon>Bacteria</taxon>
        <taxon>Pseudomonadati</taxon>
        <taxon>Aquificota</taxon>
        <taxon>Aquificia</taxon>
        <taxon>Aquificales</taxon>
        <taxon>Aquificaceae</taxon>
        <taxon>Hydrogenobaculum</taxon>
    </lineage>
</organism>
<dbReference type="EC" id="6.3.3.3" evidence="1"/>
<dbReference type="EMBL" id="CP001130">
    <property type="protein sequence ID" value="ACG57204.1"/>
    <property type="molecule type" value="Genomic_DNA"/>
</dbReference>
<dbReference type="RefSeq" id="WP_012513560.1">
    <property type="nucleotide sequence ID" value="NC_011126.1"/>
</dbReference>
<dbReference type="SMR" id="B4U7U3"/>
<dbReference type="STRING" id="380749.HY04AAS1_0517"/>
<dbReference type="KEGG" id="hya:HY04AAS1_0517"/>
<dbReference type="eggNOG" id="COG0132">
    <property type="taxonomic scope" value="Bacteria"/>
</dbReference>
<dbReference type="HOGENOM" id="CLU_072551_3_1_0"/>
<dbReference type="OrthoDB" id="9802097at2"/>
<dbReference type="UniPathway" id="UPA00078">
    <property type="reaction ID" value="UER00161"/>
</dbReference>
<dbReference type="GO" id="GO:0005829">
    <property type="term" value="C:cytosol"/>
    <property type="evidence" value="ECO:0007669"/>
    <property type="project" value="TreeGrafter"/>
</dbReference>
<dbReference type="GO" id="GO:0005524">
    <property type="term" value="F:ATP binding"/>
    <property type="evidence" value="ECO:0007669"/>
    <property type="project" value="UniProtKB-UniRule"/>
</dbReference>
<dbReference type="GO" id="GO:0004141">
    <property type="term" value="F:dethiobiotin synthase activity"/>
    <property type="evidence" value="ECO:0007669"/>
    <property type="project" value="UniProtKB-UniRule"/>
</dbReference>
<dbReference type="GO" id="GO:0000287">
    <property type="term" value="F:magnesium ion binding"/>
    <property type="evidence" value="ECO:0007669"/>
    <property type="project" value="UniProtKB-UniRule"/>
</dbReference>
<dbReference type="GO" id="GO:0009102">
    <property type="term" value="P:biotin biosynthetic process"/>
    <property type="evidence" value="ECO:0007669"/>
    <property type="project" value="UniProtKB-UniRule"/>
</dbReference>
<dbReference type="CDD" id="cd03109">
    <property type="entry name" value="DTBS"/>
    <property type="match status" value="1"/>
</dbReference>
<dbReference type="Gene3D" id="3.40.50.300">
    <property type="entry name" value="P-loop containing nucleotide triphosphate hydrolases"/>
    <property type="match status" value="1"/>
</dbReference>
<dbReference type="HAMAP" id="MF_00336">
    <property type="entry name" value="BioD"/>
    <property type="match status" value="1"/>
</dbReference>
<dbReference type="InterPro" id="IPR004472">
    <property type="entry name" value="DTB_synth_BioD"/>
</dbReference>
<dbReference type="InterPro" id="IPR027417">
    <property type="entry name" value="P-loop_NTPase"/>
</dbReference>
<dbReference type="NCBIfam" id="TIGR00347">
    <property type="entry name" value="bioD"/>
    <property type="match status" value="1"/>
</dbReference>
<dbReference type="PANTHER" id="PTHR43210:SF2">
    <property type="entry name" value="ATP-DEPENDENT DETHIOBIOTIN SYNTHETASE BIOD 2"/>
    <property type="match status" value="1"/>
</dbReference>
<dbReference type="PANTHER" id="PTHR43210">
    <property type="entry name" value="DETHIOBIOTIN SYNTHETASE"/>
    <property type="match status" value="1"/>
</dbReference>
<dbReference type="Pfam" id="PF13500">
    <property type="entry name" value="AAA_26"/>
    <property type="match status" value="1"/>
</dbReference>
<dbReference type="PIRSF" id="PIRSF006755">
    <property type="entry name" value="DTB_synth"/>
    <property type="match status" value="1"/>
</dbReference>
<dbReference type="SUPFAM" id="SSF52540">
    <property type="entry name" value="P-loop containing nucleoside triphosphate hydrolases"/>
    <property type="match status" value="1"/>
</dbReference>
<evidence type="ECO:0000255" key="1">
    <source>
        <dbReference type="HAMAP-Rule" id="MF_00336"/>
    </source>
</evidence>
<sequence>MILFVSATDTGVGKTYISTILVEYLKNKGINVDYIKPIETGVDEKPEDAYKVSSILGKPWQESVIYIFKKPMSPYACSLDEEVDIDVDRIIKTIKEREQKASVLIVEGAGGIAVPIKVKPLIDYAYLIKSLHALPLVVARAYLGTLNHSFLTYFYLKSKDIKPLGFVLNGFDYEEPSQYSNAYILQDMIEEHINIWRLDKNPDENQRINLAENIWKSIANF</sequence>
<name>BIOD_HYDS0</name>
<gene>
    <name evidence="1" type="primary">bioD</name>
    <name type="ordered locus">HY04AAS1_0517</name>
</gene>
<comment type="function">
    <text evidence="1">Catalyzes a mechanistically unusual reaction, the ATP-dependent insertion of CO2 between the N7 and N8 nitrogen atoms of 7,8-diaminopelargonic acid (DAPA, also called 7,8-diammoniononanoate) to form a ureido ring.</text>
</comment>
<comment type="catalytic activity">
    <reaction evidence="1">
        <text>(7R,8S)-7,8-diammoniononanoate + CO2 + ATP = (4R,5S)-dethiobiotin + ADP + phosphate + 3 H(+)</text>
        <dbReference type="Rhea" id="RHEA:15805"/>
        <dbReference type="ChEBI" id="CHEBI:15378"/>
        <dbReference type="ChEBI" id="CHEBI:16526"/>
        <dbReference type="ChEBI" id="CHEBI:30616"/>
        <dbReference type="ChEBI" id="CHEBI:43474"/>
        <dbReference type="ChEBI" id="CHEBI:149469"/>
        <dbReference type="ChEBI" id="CHEBI:149473"/>
        <dbReference type="ChEBI" id="CHEBI:456216"/>
        <dbReference type="EC" id="6.3.3.3"/>
    </reaction>
</comment>
<comment type="cofactor">
    <cofactor evidence="1">
        <name>Mg(2+)</name>
        <dbReference type="ChEBI" id="CHEBI:18420"/>
    </cofactor>
</comment>
<comment type="pathway">
    <text evidence="1">Cofactor biosynthesis; biotin biosynthesis; biotin from 7,8-diaminononanoate: step 1/2.</text>
</comment>
<comment type="subunit">
    <text evidence="1">Homodimer.</text>
</comment>
<comment type="subcellular location">
    <subcellularLocation>
        <location evidence="1">Cytoplasm</location>
    </subcellularLocation>
</comment>
<comment type="similarity">
    <text evidence="1">Belongs to the dethiobiotin synthetase family.</text>
</comment>
<reference key="1">
    <citation type="journal article" date="2009" name="J. Bacteriol.">
        <title>Complete and draft genome sequences of six members of the Aquificales.</title>
        <authorList>
            <person name="Reysenbach A.-L."/>
            <person name="Hamamura N."/>
            <person name="Podar M."/>
            <person name="Griffiths E."/>
            <person name="Ferreira S."/>
            <person name="Hochstein R."/>
            <person name="Heidelberg J."/>
            <person name="Johnson J."/>
            <person name="Mead D."/>
            <person name="Pohorille A."/>
            <person name="Sarmiento M."/>
            <person name="Schweighofer K."/>
            <person name="Seshadri R."/>
            <person name="Voytek M.A."/>
        </authorList>
    </citation>
    <scope>NUCLEOTIDE SEQUENCE [LARGE SCALE GENOMIC DNA]</scope>
    <source>
        <strain>Y04AAS1</strain>
    </source>
</reference>
<keyword id="KW-0067">ATP-binding</keyword>
<keyword id="KW-0093">Biotin biosynthesis</keyword>
<keyword id="KW-0963">Cytoplasm</keyword>
<keyword id="KW-0436">Ligase</keyword>
<keyword id="KW-0460">Magnesium</keyword>
<keyword id="KW-0479">Metal-binding</keyword>
<keyword id="KW-0547">Nucleotide-binding</keyword>
<protein>
    <recommendedName>
        <fullName evidence="1">ATP-dependent dethiobiotin synthetase BioD</fullName>
        <ecNumber evidence="1">6.3.3.3</ecNumber>
    </recommendedName>
    <alternativeName>
        <fullName evidence="1">DTB synthetase</fullName>
        <shortName evidence="1">DTBS</shortName>
    </alternativeName>
    <alternativeName>
        <fullName evidence="1">Dethiobiotin synthase</fullName>
    </alternativeName>
</protein>